<evidence type="ECO:0000255" key="1">
    <source>
        <dbReference type="HAMAP-Rule" id="MF_00211"/>
    </source>
</evidence>
<protein>
    <recommendedName>
        <fullName evidence="1">Anthranilate phosphoribosyltransferase</fullName>
        <ecNumber evidence="1">2.4.2.18</ecNumber>
    </recommendedName>
</protein>
<comment type="function">
    <text evidence="1">Catalyzes the transfer of the phosphoribosyl group of 5-phosphorylribose-1-pyrophosphate (PRPP) to anthranilate to yield N-(5'-phosphoribosyl)-anthranilate (PRA).</text>
</comment>
<comment type="catalytic activity">
    <reaction evidence="1">
        <text>N-(5-phospho-beta-D-ribosyl)anthranilate + diphosphate = 5-phospho-alpha-D-ribose 1-diphosphate + anthranilate</text>
        <dbReference type="Rhea" id="RHEA:11768"/>
        <dbReference type="ChEBI" id="CHEBI:16567"/>
        <dbReference type="ChEBI" id="CHEBI:18277"/>
        <dbReference type="ChEBI" id="CHEBI:33019"/>
        <dbReference type="ChEBI" id="CHEBI:58017"/>
        <dbReference type="EC" id="2.4.2.18"/>
    </reaction>
</comment>
<comment type="cofactor">
    <cofactor evidence="1">
        <name>Mg(2+)</name>
        <dbReference type="ChEBI" id="CHEBI:18420"/>
    </cofactor>
    <text evidence="1">Binds 2 magnesium ions per monomer.</text>
</comment>
<comment type="pathway">
    <text evidence="1">Amino-acid biosynthesis; L-tryptophan biosynthesis; L-tryptophan from chorismate: step 2/5.</text>
</comment>
<comment type="subunit">
    <text evidence="1">Homodimer.</text>
</comment>
<comment type="similarity">
    <text evidence="1">Belongs to the anthranilate phosphoribosyltransferase family.</text>
</comment>
<accession>B3EH38</accession>
<gene>
    <name evidence="1" type="primary">trpD</name>
    <name type="ordered locus">Clim_0631</name>
</gene>
<proteinExistence type="inferred from homology"/>
<reference key="1">
    <citation type="submission" date="2008-05" db="EMBL/GenBank/DDBJ databases">
        <title>Complete sequence of Chlorobium limicola DSM 245.</title>
        <authorList>
            <consortium name="US DOE Joint Genome Institute"/>
            <person name="Lucas S."/>
            <person name="Copeland A."/>
            <person name="Lapidus A."/>
            <person name="Glavina del Rio T."/>
            <person name="Dalin E."/>
            <person name="Tice H."/>
            <person name="Bruce D."/>
            <person name="Goodwin L."/>
            <person name="Pitluck S."/>
            <person name="Schmutz J."/>
            <person name="Larimer F."/>
            <person name="Land M."/>
            <person name="Hauser L."/>
            <person name="Kyrpides N."/>
            <person name="Ovchinnikova G."/>
            <person name="Zhao F."/>
            <person name="Li T."/>
            <person name="Liu Z."/>
            <person name="Overmann J."/>
            <person name="Bryant D.A."/>
            <person name="Richardson P."/>
        </authorList>
    </citation>
    <scope>NUCLEOTIDE SEQUENCE [LARGE SCALE GENOMIC DNA]</scope>
    <source>
        <strain>DSM 245 / NBRC 103803 / 6330</strain>
    </source>
</reference>
<organism>
    <name type="scientific">Chlorobium limicola (strain DSM 245 / NBRC 103803 / 6330)</name>
    <dbReference type="NCBI Taxonomy" id="290315"/>
    <lineage>
        <taxon>Bacteria</taxon>
        <taxon>Pseudomonadati</taxon>
        <taxon>Chlorobiota</taxon>
        <taxon>Chlorobiia</taxon>
        <taxon>Chlorobiales</taxon>
        <taxon>Chlorobiaceae</taxon>
        <taxon>Chlorobium/Pelodictyon group</taxon>
        <taxon>Chlorobium</taxon>
    </lineage>
</organism>
<keyword id="KW-0028">Amino-acid biosynthesis</keyword>
<keyword id="KW-0057">Aromatic amino acid biosynthesis</keyword>
<keyword id="KW-0328">Glycosyltransferase</keyword>
<keyword id="KW-0460">Magnesium</keyword>
<keyword id="KW-0479">Metal-binding</keyword>
<keyword id="KW-0808">Transferase</keyword>
<keyword id="KW-0822">Tryptophan biosynthesis</keyword>
<feature type="chain" id="PRO_1000099792" description="Anthranilate phosphoribosyltransferase">
    <location>
        <begin position="1"/>
        <end position="351"/>
    </location>
</feature>
<feature type="binding site" evidence="1">
    <location>
        <position position="80"/>
    </location>
    <ligand>
        <name>5-phospho-alpha-D-ribose 1-diphosphate</name>
        <dbReference type="ChEBI" id="CHEBI:58017"/>
    </ligand>
</feature>
<feature type="binding site" evidence="1">
    <location>
        <position position="80"/>
    </location>
    <ligand>
        <name>anthranilate</name>
        <dbReference type="ChEBI" id="CHEBI:16567"/>
        <label>1</label>
    </ligand>
</feature>
<feature type="binding site" evidence="1">
    <location>
        <begin position="83"/>
        <end position="84"/>
    </location>
    <ligand>
        <name>5-phospho-alpha-D-ribose 1-diphosphate</name>
        <dbReference type="ChEBI" id="CHEBI:58017"/>
    </ligand>
</feature>
<feature type="binding site" evidence="1">
    <location>
        <position position="88"/>
    </location>
    <ligand>
        <name>5-phospho-alpha-D-ribose 1-diphosphate</name>
        <dbReference type="ChEBI" id="CHEBI:58017"/>
    </ligand>
</feature>
<feature type="binding site" evidence="1">
    <location>
        <begin position="90"/>
        <end position="93"/>
    </location>
    <ligand>
        <name>5-phospho-alpha-D-ribose 1-diphosphate</name>
        <dbReference type="ChEBI" id="CHEBI:58017"/>
    </ligand>
</feature>
<feature type="binding site" evidence="1">
    <location>
        <position position="92"/>
    </location>
    <ligand>
        <name>Mg(2+)</name>
        <dbReference type="ChEBI" id="CHEBI:18420"/>
        <label>1</label>
    </ligand>
</feature>
<feature type="binding site" evidence="1">
    <location>
        <begin position="108"/>
        <end position="116"/>
    </location>
    <ligand>
        <name>5-phospho-alpha-D-ribose 1-diphosphate</name>
        <dbReference type="ChEBI" id="CHEBI:58017"/>
    </ligand>
</feature>
<feature type="binding site" evidence="1">
    <location>
        <position position="111"/>
    </location>
    <ligand>
        <name>anthranilate</name>
        <dbReference type="ChEBI" id="CHEBI:16567"/>
        <label>1</label>
    </ligand>
</feature>
<feature type="binding site" evidence="1">
    <location>
        <position position="120"/>
    </location>
    <ligand>
        <name>5-phospho-alpha-D-ribose 1-diphosphate</name>
        <dbReference type="ChEBI" id="CHEBI:58017"/>
    </ligand>
</feature>
<feature type="binding site" evidence="1">
    <location>
        <position position="166"/>
    </location>
    <ligand>
        <name>anthranilate</name>
        <dbReference type="ChEBI" id="CHEBI:16567"/>
        <label>2</label>
    </ligand>
</feature>
<feature type="binding site" evidence="1">
    <location>
        <position position="229"/>
    </location>
    <ligand>
        <name>Mg(2+)</name>
        <dbReference type="ChEBI" id="CHEBI:18420"/>
        <label>2</label>
    </ligand>
</feature>
<feature type="binding site" evidence="1">
    <location>
        <position position="230"/>
    </location>
    <ligand>
        <name>Mg(2+)</name>
        <dbReference type="ChEBI" id="CHEBI:18420"/>
        <label>1</label>
    </ligand>
</feature>
<feature type="binding site" evidence="1">
    <location>
        <position position="230"/>
    </location>
    <ligand>
        <name>Mg(2+)</name>
        <dbReference type="ChEBI" id="CHEBI:18420"/>
        <label>2</label>
    </ligand>
</feature>
<name>TRPD_CHLL2</name>
<dbReference type="EC" id="2.4.2.18" evidence="1"/>
<dbReference type="EMBL" id="CP001097">
    <property type="protein sequence ID" value="ACD89718.1"/>
    <property type="molecule type" value="Genomic_DNA"/>
</dbReference>
<dbReference type="RefSeq" id="WP_012465599.1">
    <property type="nucleotide sequence ID" value="NC_010803.1"/>
</dbReference>
<dbReference type="SMR" id="B3EH38"/>
<dbReference type="STRING" id="290315.Clim_0631"/>
<dbReference type="KEGG" id="cli:Clim_0631"/>
<dbReference type="eggNOG" id="COG0547">
    <property type="taxonomic scope" value="Bacteria"/>
</dbReference>
<dbReference type="HOGENOM" id="CLU_034315_2_1_10"/>
<dbReference type="OrthoDB" id="9806430at2"/>
<dbReference type="UniPathway" id="UPA00035">
    <property type="reaction ID" value="UER00041"/>
</dbReference>
<dbReference type="Proteomes" id="UP000008841">
    <property type="component" value="Chromosome"/>
</dbReference>
<dbReference type="GO" id="GO:0005829">
    <property type="term" value="C:cytosol"/>
    <property type="evidence" value="ECO:0007669"/>
    <property type="project" value="TreeGrafter"/>
</dbReference>
<dbReference type="GO" id="GO:0004048">
    <property type="term" value="F:anthranilate phosphoribosyltransferase activity"/>
    <property type="evidence" value="ECO:0007669"/>
    <property type="project" value="UniProtKB-UniRule"/>
</dbReference>
<dbReference type="GO" id="GO:0000287">
    <property type="term" value="F:magnesium ion binding"/>
    <property type="evidence" value="ECO:0007669"/>
    <property type="project" value="UniProtKB-UniRule"/>
</dbReference>
<dbReference type="GO" id="GO:0000162">
    <property type="term" value="P:L-tryptophan biosynthetic process"/>
    <property type="evidence" value="ECO:0007669"/>
    <property type="project" value="UniProtKB-UniRule"/>
</dbReference>
<dbReference type="FunFam" id="3.40.1030.10:FF:000002">
    <property type="entry name" value="Anthranilate phosphoribosyltransferase"/>
    <property type="match status" value="1"/>
</dbReference>
<dbReference type="Gene3D" id="3.40.1030.10">
    <property type="entry name" value="Nucleoside phosphorylase/phosphoribosyltransferase catalytic domain"/>
    <property type="match status" value="1"/>
</dbReference>
<dbReference type="Gene3D" id="1.20.970.10">
    <property type="entry name" value="Transferase, Pyrimidine Nucleoside Phosphorylase, Chain C"/>
    <property type="match status" value="1"/>
</dbReference>
<dbReference type="HAMAP" id="MF_00211">
    <property type="entry name" value="TrpD"/>
    <property type="match status" value="1"/>
</dbReference>
<dbReference type="InterPro" id="IPR005940">
    <property type="entry name" value="Anthranilate_Pribosyl_Tfrase"/>
</dbReference>
<dbReference type="InterPro" id="IPR000312">
    <property type="entry name" value="Glycosyl_Trfase_fam3"/>
</dbReference>
<dbReference type="InterPro" id="IPR017459">
    <property type="entry name" value="Glycosyl_Trfase_fam3_N_dom"/>
</dbReference>
<dbReference type="InterPro" id="IPR036320">
    <property type="entry name" value="Glycosyl_Trfase_fam3_N_dom_sf"/>
</dbReference>
<dbReference type="InterPro" id="IPR035902">
    <property type="entry name" value="Nuc_phospho_transferase"/>
</dbReference>
<dbReference type="NCBIfam" id="TIGR01245">
    <property type="entry name" value="trpD"/>
    <property type="match status" value="1"/>
</dbReference>
<dbReference type="PANTHER" id="PTHR43285">
    <property type="entry name" value="ANTHRANILATE PHOSPHORIBOSYLTRANSFERASE"/>
    <property type="match status" value="1"/>
</dbReference>
<dbReference type="PANTHER" id="PTHR43285:SF2">
    <property type="entry name" value="ANTHRANILATE PHOSPHORIBOSYLTRANSFERASE"/>
    <property type="match status" value="1"/>
</dbReference>
<dbReference type="Pfam" id="PF02885">
    <property type="entry name" value="Glycos_trans_3N"/>
    <property type="match status" value="1"/>
</dbReference>
<dbReference type="Pfam" id="PF00591">
    <property type="entry name" value="Glycos_transf_3"/>
    <property type="match status" value="1"/>
</dbReference>
<dbReference type="SUPFAM" id="SSF52418">
    <property type="entry name" value="Nucleoside phosphorylase/phosphoribosyltransferase catalytic domain"/>
    <property type="match status" value="1"/>
</dbReference>
<dbReference type="SUPFAM" id="SSF47648">
    <property type="entry name" value="Nucleoside phosphorylase/phosphoribosyltransferase N-terminal domain"/>
    <property type="match status" value="1"/>
</dbReference>
<sequence length="351" mass="38118">MGHKDFLHKLLSGDHFSQEEMTQCMNAIMNGVFPDTVIAALLALLEHKGVTSTEVAGAYYSLIAKANTIDLSPDAVDTCGTGGDHAGTYNISTIGSIIANSTGVSIAKHGNRSVTSSCGSADVLEELGFRIDLPVEATVELYARTGFSFLFAPLFHPSMKRVAHIRKELGIRTIFNMLGPLINPARSKRQLVGVYSSELMELYTEVLLQTGTRHAMIVHAMTEEGVSLDEPSLNGPTYIVEIQNGYVCRHTVYPEDFGLDRHPLSAIQGGERKQNAAIIRSILDGSASPAQIDAALYTSAMACYVSGHARCIDDGLTISRESLESGDTDRKFREILDFNAELSARYREAVN</sequence>